<dbReference type="EC" id="3.6.5.3" evidence="2"/>
<dbReference type="EMBL" id="CP000238">
    <property type="protein sequence ID" value="ABF14226.1"/>
    <property type="molecule type" value="Genomic_DNA"/>
</dbReference>
<dbReference type="RefSeq" id="WP_011520663.1">
    <property type="nucleotide sequence ID" value="NC_007984.1"/>
</dbReference>
<dbReference type="SMR" id="Q1LSY4"/>
<dbReference type="STRING" id="374463.BCI_0495"/>
<dbReference type="KEGG" id="bci:BCI_0495"/>
<dbReference type="HOGENOM" id="CLU_007265_0_0_6"/>
<dbReference type="OrthoDB" id="9803139at2"/>
<dbReference type="Proteomes" id="UP000002427">
    <property type="component" value="Chromosome"/>
</dbReference>
<dbReference type="GO" id="GO:0005829">
    <property type="term" value="C:cytosol"/>
    <property type="evidence" value="ECO:0007669"/>
    <property type="project" value="TreeGrafter"/>
</dbReference>
<dbReference type="GO" id="GO:0005525">
    <property type="term" value="F:GTP binding"/>
    <property type="evidence" value="ECO:0007669"/>
    <property type="project" value="UniProtKB-UniRule"/>
</dbReference>
<dbReference type="GO" id="GO:0003924">
    <property type="term" value="F:GTPase activity"/>
    <property type="evidence" value="ECO:0007669"/>
    <property type="project" value="InterPro"/>
</dbReference>
<dbReference type="GO" id="GO:0097216">
    <property type="term" value="F:guanosine tetraphosphate binding"/>
    <property type="evidence" value="ECO:0007669"/>
    <property type="project" value="UniProtKB-ARBA"/>
</dbReference>
<dbReference type="GO" id="GO:0003746">
    <property type="term" value="F:translation elongation factor activity"/>
    <property type="evidence" value="ECO:0007669"/>
    <property type="project" value="UniProtKB-UniRule"/>
</dbReference>
<dbReference type="CDD" id="cd01884">
    <property type="entry name" value="EF_Tu"/>
    <property type="match status" value="1"/>
</dbReference>
<dbReference type="CDD" id="cd03697">
    <property type="entry name" value="EFTU_II"/>
    <property type="match status" value="1"/>
</dbReference>
<dbReference type="CDD" id="cd03707">
    <property type="entry name" value="EFTU_III"/>
    <property type="match status" value="1"/>
</dbReference>
<dbReference type="FunFam" id="2.40.30.10:FF:000001">
    <property type="entry name" value="Elongation factor Tu"/>
    <property type="match status" value="1"/>
</dbReference>
<dbReference type="FunFam" id="3.40.50.300:FF:000003">
    <property type="entry name" value="Elongation factor Tu"/>
    <property type="match status" value="1"/>
</dbReference>
<dbReference type="Gene3D" id="3.40.50.300">
    <property type="entry name" value="P-loop containing nucleotide triphosphate hydrolases"/>
    <property type="match status" value="1"/>
</dbReference>
<dbReference type="Gene3D" id="2.40.30.10">
    <property type="entry name" value="Translation factors"/>
    <property type="match status" value="2"/>
</dbReference>
<dbReference type="HAMAP" id="MF_00118_B">
    <property type="entry name" value="EF_Tu_B"/>
    <property type="match status" value="1"/>
</dbReference>
<dbReference type="InterPro" id="IPR041709">
    <property type="entry name" value="EF-Tu_GTP-bd"/>
</dbReference>
<dbReference type="InterPro" id="IPR050055">
    <property type="entry name" value="EF-Tu_GTPase"/>
</dbReference>
<dbReference type="InterPro" id="IPR004161">
    <property type="entry name" value="EFTu-like_2"/>
</dbReference>
<dbReference type="InterPro" id="IPR033720">
    <property type="entry name" value="EFTU_2"/>
</dbReference>
<dbReference type="InterPro" id="IPR031157">
    <property type="entry name" value="G_TR_CS"/>
</dbReference>
<dbReference type="InterPro" id="IPR027417">
    <property type="entry name" value="P-loop_NTPase"/>
</dbReference>
<dbReference type="InterPro" id="IPR005225">
    <property type="entry name" value="Small_GTP-bd"/>
</dbReference>
<dbReference type="InterPro" id="IPR000795">
    <property type="entry name" value="T_Tr_GTP-bd_dom"/>
</dbReference>
<dbReference type="InterPro" id="IPR009000">
    <property type="entry name" value="Transl_B-barrel_sf"/>
</dbReference>
<dbReference type="InterPro" id="IPR009001">
    <property type="entry name" value="Transl_elong_EF1A/Init_IF2_C"/>
</dbReference>
<dbReference type="InterPro" id="IPR004541">
    <property type="entry name" value="Transl_elong_EFTu/EF1A_bac/org"/>
</dbReference>
<dbReference type="InterPro" id="IPR004160">
    <property type="entry name" value="Transl_elong_EFTu/EF1A_C"/>
</dbReference>
<dbReference type="NCBIfam" id="TIGR00485">
    <property type="entry name" value="EF-Tu"/>
    <property type="match status" value="1"/>
</dbReference>
<dbReference type="NCBIfam" id="NF000766">
    <property type="entry name" value="PRK00049.1"/>
    <property type="match status" value="1"/>
</dbReference>
<dbReference type="NCBIfam" id="NF009372">
    <property type="entry name" value="PRK12735.1"/>
    <property type="match status" value="1"/>
</dbReference>
<dbReference type="NCBIfam" id="NF009373">
    <property type="entry name" value="PRK12736.1"/>
    <property type="match status" value="1"/>
</dbReference>
<dbReference type="NCBIfam" id="TIGR00231">
    <property type="entry name" value="small_GTP"/>
    <property type="match status" value="1"/>
</dbReference>
<dbReference type="PANTHER" id="PTHR43721:SF22">
    <property type="entry name" value="ELONGATION FACTOR TU, MITOCHONDRIAL"/>
    <property type="match status" value="1"/>
</dbReference>
<dbReference type="PANTHER" id="PTHR43721">
    <property type="entry name" value="ELONGATION FACTOR TU-RELATED"/>
    <property type="match status" value="1"/>
</dbReference>
<dbReference type="Pfam" id="PF00009">
    <property type="entry name" value="GTP_EFTU"/>
    <property type="match status" value="1"/>
</dbReference>
<dbReference type="Pfam" id="PF03144">
    <property type="entry name" value="GTP_EFTU_D2"/>
    <property type="match status" value="1"/>
</dbReference>
<dbReference type="Pfam" id="PF03143">
    <property type="entry name" value="GTP_EFTU_D3"/>
    <property type="match status" value="1"/>
</dbReference>
<dbReference type="PRINTS" id="PR00315">
    <property type="entry name" value="ELONGATNFCT"/>
</dbReference>
<dbReference type="SUPFAM" id="SSF50465">
    <property type="entry name" value="EF-Tu/eEF-1alpha/eIF2-gamma C-terminal domain"/>
    <property type="match status" value="1"/>
</dbReference>
<dbReference type="SUPFAM" id="SSF52540">
    <property type="entry name" value="P-loop containing nucleoside triphosphate hydrolases"/>
    <property type="match status" value="1"/>
</dbReference>
<dbReference type="SUPFAM" id="SSF50447">
    <property type="entry name" value="Translation proteins"/>
    <property type="match status" value="1"/>
</dbReference>
<dbReference type="PROSITE" id="PS00301">
    <property type="entry name" value="G_TR_1"/>
    <property type="match status" value="1"/>
</dbReference>
<dbReference type="PROSITE" id="PS51722">
    <property type="entry name" value="G_TR_2"/>
    <property type="match status" value="1"/>
</dbReference>
<feature type="chain" id="PRO_1000015613" description="Elongation factor Tu">
    <location>
        <begin position="1"/>
        <end position="394"/>
    </location>
</feature>
<feature type="domain" description="tr-type G">
    <location>
        <begin position="10"/>
        <end position="204"/>
    </location>
</feature>
<feature type="region of interest" description="G1" evidence="1">
    <location>
        <begin position="19"/>
        <end position="26"/>
    </location>
</feature>
<feature type="region of interest" description="G2" evidence="1">
    <location>
        <begin position="60"/>
        <end position="64"/>
    </location>
</feature>
<feature type="region of interest" description="G3" evidence="1">
    <location>
        <begin position="81"/>
        <end position="84"/>
    </location>
</feature>
<feature type="region of interest" description="G4" evidence="1">
    <location>
        <begin position="136"/>
        <end position="139"/>
    </location>
</feature>
<feature type="region of interest" description="G5" evidence="1">
    <location>
        <begin position="174"/>
        <end position="176"/>
    </location>
</feature>
<feature type="binding site" evidence="2">
    <location>
        <begin position="19"/>
        <end position="26"/>
    </location>
    <ligand>
        <name>GTP</name>
        <dbReference type="ChEBI" id="CHEBI:37565"/>
    </ligand>
</feature>
<feature type="binding site" evidence="2">
    <location>
        <position position="26"/>
    </location>
    <ligand>
        <name>Mg(2+)</name>
        <dbReference type="ChEBI" id="CHEBI:18420"/>
    </ligand>
</feature>
<feature type="binding site" evidence="2">
    <location>
        <begin position="81"/>
        <end position="85"/>
    </location>
    <ligand>
        <name>GTP</name>
        <dbReference type="ChEBI" id="CHEBI:37565"/>
    </ligand>
</feature>
<feature type="binding site" evidence="2">
    <location>
        <begin position="136"/>
        <end position="139"/>
    </location>
    <ligand>
        <name>GTP</name>
        <dbReference type="ChEBI" id="CHEBI:37565"/>
    </ligand>
</feature>
<gene>
    <name evidence="2" type="primary">tuf</name>
    <name type="ordered locus">BCI_0495</name>
</gene>
<proteinExistence type="inferred from homology"/>
<protein>
    <recommendedName>
        <fullName evidence="2">Elongation factor Tu</fullName>
        <shortName evidence="2">EF-Tu</shortName>
        <ecNumber evidence="2">3.6.5.3</ecNumber>
    </recommendedName>
</protein>
<comment type="function">
    <text evidence="2">GTP hydrolase that promotes the GTP-dependent binding of aminoacyl-tRNA to the A-site of ribosomes during protein biosynthesis.</text>
</comment>
<comment type="catalytic activity">
    <reaction evidence="2">
        <text>GTP + H2O = GDP + phosphate + H(+)</text>
        <dbReference type="Rhea" id="RHEA:19669"/>
        <dbReference type="ChEBI" id="CHEBI:15377"/>
        <dbReference type="ChEBI" id="CHEBI:15378"/>
        <dbReference type="ChEBI" id="CHEBI:37565"/>
        <dbReference type="ChEBI" id="CHEBI:43474"/>
        <dbReference type="ChEBI" id="CHEBI:58189"/>
        <dbReference type="EC" id="3.6.5.3"/>
    </reaction>
    <physiologicalReaction direction="left-to-right" evidence="2">
        <dbReference type="Rhea" id="RHEA:19670"/>
    </physiologicalReaction>
</comment>
<comment type="subunit">
    <text evidence="2">Monomer.</text>
</comment>
<comment type="subcellular location">
    <subcellularLocation>
        <location evidence="2">Cytoplasm</location>
    </subcellularLocation>
</comment>
<comment type="similarity">
    <text evidence="2">Belongs to the TRAFAC class translation factor GTPase superfamily. Classic translation factor GTPase family. EF-Tu/EF-1A subfamily.</text>
</comment>
<accession>Q1LSY4</accession>
<evidence type="ECO:0000250" key="1"/>
<evidence type="ECO:0000255" key="2">
    <source>
        <dbReference type="HAMAP-Rule" id="MF_00118"/>
    </source>
</evidence>
<reference key="1">
    <citation type="journal article" date="2006" name="PLoS Biol.">
        <title>Metabolic complementarity and genomics of the dual bacterial symbiosis of sharpshooters.</title>
        <authorList>
            <person name="Wu D."/>
            <person name="Daugherty S.C."/>
            <person name="Van Aken S.E."/>
            <person name="Pai G.H."/>
            <person name="Watkins K.L."/>
            <person name="Khouri H."/>
            <person name="Tallon L.J."/>
            <person name="Zaborsky J.M."/>
            <person name="Dunbar H.E."/>
            <person name="Tran P.L."/>
            <person name="Moran N.A."/>
            <person name="Eisen J.A."/>
        </authorList>
    </citation>
    <scope>NUCLEOTIDE SEQUENCE [LARGE SCALE GENOMIC DNA]</scope>
</reference>
<keyword id="KW-0963">Cytoplasm</keyword>
<keyword id="KW-0251">Elongation factor</keyword>
<keyword id="KW-0342">GTP-binding</keyword>
<keyword id="KW-0378">Hydrolase</keyword>
<keyword id="KW-0460">Magnesium</keyword>
<keyword id="KW-0479">Metal-binding</keyword>
<keyword id="KW-0547">Nucleotide-binding</keyword>
<keyword id="KW-0648">Protein biosynthesis</keyword>
<keyword id="KW-1185">Reference proteome</keyword>
<organism>
    <name type="scientific">Baumannia cicadellinicola subsp. Homalodisca coagulata</name>
    <dbReference type="NCBI Taxonomy" id="374463"/>
    <lineage>
        <taxon>Bacteria</taxon>
        <taxon>Pseudomonadati</taxon>
        <taxon>Pseudomonadota</taxon>
        <taxon>Gammaproteobacteria</taxon>
        <taxon>Candidatus Palibaumannia</taxon>
    </lineage>
</organism>
<name>EFTU_BAUCH</name>
<sequence length="394" mass="43429">MSKEKFQRTKLHINVGTIGHVDHGKTTLTAAITAVLAKAYGGNALAFDQIDNAPEEKARGITINTSHVEYDTKNRHYAHVDCPGHADYVKNMITGAAQMDGAILVVAATDGPMPQTREHILLARQVGVPYIIVFINKCDMVDDSELLELVEIEVRELLSQYEFPGENTPIIRGSALKALEHDVDWTSKIIELAEVLDSYIPEPKRAIDKPFLLPIEDVFSISGRGTVVTGRVERGILKVGEEVEIIGIKNTTKTTCTGVEMFRKLLDEGRAGENIGVLLRGVKRDDVERGQVLAKPGSIKPHTKFASEVYILNKDEGGRHTPFFKGYRPQFYFRTTDVTGTIELPIDVEMVMPGDNIKMIVNLIAPIAMDQGLRFAIREGGRTVGAGIVTDIIE</sequence>